<comment type="function">
    <text evidence="1">Endonuclease that is involved in the suppression of homologous recombination and thus may have a key role in the control of bacterial genetic diversity.</text>
</comment>
<comment type="function">
    <text evidence="1">Acts as a ribosome collision sensor, splitting the ribosome into its 2 subunits. Detects stalled/collided 70S ribosomes which it binds and splits by an ATP-hydrolysis driven conformational change. Acts upstream of the ribosome quality control system (RQC), a ribosome-associated complex that mediates the extraction of incompletely synthesized nascent chains from stalled ribosomes and their subsequent degradation. Probably generates substrates for RQC.</text>
</comment>
<comment type="subunit">
    <text evidence="1">Homodimer. Binds to stalled ribosomes, contacting rRNA.</text>
</comment>
<comment type="similarity">
    <text evidence="1">Belongs to the DNA mismatch repair MutS family. MutS2 subfamily.</text>
</comment>
<protein>
    <recommendedName>
        <fullName evidence="1">Endonuclease MutS2</fullName>
        <ecNumber evidence="1">3.1.-.-</ecNumber>
    </recommendedName>
    <alternativeName>
        <fullName evidence="1">Ribosome-associated protein quality control-upstream factor</fullName>
        <shortName evidence="1">RQC-upstream factor</shortName>
        <shortName evidence="1">RqcU</shortName>
        <ecNumber evidence="1">3.6.4.-</ecNumber>
    </alternativeName>
</protein>
<feature type="chain" id="PRO_1000093363" description="Endonuclease MutS2">
    <location>
        <begin position="1"/>
        <end position="786"/>
    </location>
</feature>
<feature type="domain" description="Smr" evidence="1">
    <location>
        <begin position="711"/>
        <end position="786"/>
    </location>
</feature>
<feature type="region of interest" description="Disordered" evidence="2">
    <location>
        <begin position="682"/>
        <end position="709"/>
    </location>
</feature>
<feature type="binding site" evidence="1">
    <location>
        <begin position="333"/>
        <end position="340"/>
    </location>
    <ligand>
        <name>ATP</name>
        <dbReference type="ChEBI" id="CHEBI:30616"/>
    </ligand>
</feature>
<proteinExistence type="inferred from homology"/>
<organism>
    <name type="scientific">Lacticaseibacillus casei (strain BL23)</name>
    <name type="common">Lactobacillus casei</name>
    <dbReference type="NCBI Taxonomy" id="543734"/>
    <lineage>
        <taxon>Bacteria</taxon>
        <taxon>Bacillati</taxon>
        <taxon>Bacillota</taxon>
        <taxon>Bacilli</taxon>
        <taxon>Lactobacillales</taxon>
        <taxon>Lactobacillaceae</taxon>
        <taxon>Lacticaseibacillus</taxon>
    </lineage>
</organism>
<dbReference type="EC" id="3.1.-.-" evidence="1"/>
<dbReference type="EC" id="3.6.4.-" evidence="1"/>
<dbReference type="EMBL" id="FM177140">
    <property type="protein sequence ID" value="CAQ65975.1"/>
    <property type="molecule type" value="Genomic_DNA"/>
</dbReference>
<dbReference type="SMR" id="B3WC74"/>
<dbReference type="KEGG" id="lcb:LCABL_08520"/>
<dbReference type="HOGENOM" id="CLU_011252_2_1_9"/>
<dbReference type="GO" id="GO:0005524">
    <property type="term" value="F:ATP binding"/>
    <property type="evidence" value="ECO:0007669"/>
    <property type="project" value="UniProtKB-UniRule"/>
</dbReference>
<dbReference type="GO" id="GO:0016887">
    <property type="term" value="F:ATP hydrolysis activity"/>
    <property type="evidence" value="ECO:0007669"/>
    <property type="project" value="InterPro"/>
</dbReference>
<dbReference type="GO" id="GO:0140664">
    <property type="term" value="F:ATP-dependent DNA damage sensor activity"/>
    <property type="evidence" value="ECO:0007669"/>
    <property type="project" value="InterPro"/>
</dbReference>
<dbReference type="GO" id="GO:0004519">
    <property type="term" value="F:endonuclease activity"/>
    <property type="evidence" value="ECO:0007669"/>
    <property type="project" value="UniProtKB-UniRule"/>
</dbReference>
<dbReference type="GO" id="GO:0030983">
    <property type="term" value="F:mismatched DNA binding"/>
    <property type="evidence" value="ECO:0007669"/>
    <property type="project" value="InterPro"/>
</dbReference>
<dbReference type="GO" id="GO:0043023">
    <property type="term" value="F:ribosomal large subunit binding"/>
    <property type="evidence" value="ECO:0007669"/>
    <property type="project" value="UniProtKB-UniRule"/>
</dbReference>
<dbReference type="GO" id="GO:0019843">
    <property type="term" value="F:rRNA binding"/>
    <property type="evidence" value="ECO:0007669"/>
    <property type="project" value="UniProtKB-UniRule"/>
</dbReference>
<dbReference type="GO" id="GO:0006298">
    <property type="term" value="P:mismatch repair"/>
    <property type="evidence" value="ECO:0007669"/>
    <property type="project" value="InterPro"/>
</dbReference>
<dbReference type="GO" id="GO:0045910">
    <property type="term" value="P:negative regulation of DNA recombination"/>
    <property type="evidence" value="ECO:0007669"/>
    <property type="project" value="InterPro"/>
</dbReference>
<dbReference type="GO" id="GO:0072344">
    <property type="term" value="P:rescue of stalled ribosome"/>
    <property type="evidence" value="ECO:0007669"/>
    <property type="project" value="UniProtKB-UniRule"/>
</dbReference>
<dbReference type="FunFam" id="3.40.50.300:FF:000830">
    <property type="entry name" value="Endonuclease MutS2"/>
    <property type="match status" value="1"/>
</dbReference>
<dbReference type="Gene3D" id="3.30.1370.110">
    <property type="match status" value="1"/>
</dbReference>
<dbReference type="Gene3D" id="3.40.50.300">
    <property type="entry name" value="P-loop containing nucleotide triphosphate hydrolases"/>
    <property type="match status" value="1"/>
</dbReference>
<dbReference type="HAMAP" id="MF_00092">
    <property type="entry name" value="MutS2"/>
    <property type="match status" value="1"/>
</dbReference>
<dbReference type="InterPro" id="IPR000432">
    <property type="entry name" value="DNA_mismatch_repair_MutS_C"/>
</dbReference>
<dbReference type="InterPro" id="IPR007696">
    <property type="entry name" value="DNA_mismatch_repair_MutS_core"/>
</dbReference>
<dbReference type="InterPro" id="IPR036187">
    <property type="entry name" value="DNA_mismatch_repair_MutS_sf"/>
</dbReference>
<dbReference type="InterPro" id="IPR046893">
    <property type="entry name" value="MSSS"/>
</dbReference>
<dbReference type="InterPro" id="IPR045076">
    <property type="entry name" value="MutS"/>
</dbReference>
<dbReference type="InterPro" id="IPR005747">
    <property type="entry name" value="MutS2"/>
</dbReference>
<dbReference type="InterPro" id="IPR027417">
    <property type="entry name" value="P-loop_NTPase"/>
</dbReference>
<dbReference type="InterPro" id="IPR002625">
    <property type="entry name" value="Smr_dom"/>
</dbReference>
<dbReference type="InterPro" id="IPR036063">
    <property type="entry name" value="Smr_dom_sf"/>
</dbReference>
<dbReference type="NCBIfam" id="TIGR01069">
    <property type="entry name" value="mutS2"/>
    <property type="match status" value="1"/>
</dbReference>
<dbReference type="PANTHER" id="PTHR48466:SF2">
    <property type="entry name" value="OS10G0509000 PROTEIN"/>
    <property type="match status" value="1"/>
</dbReference>
<dbReference type="PANTHER" id="PTHR48466">
    <property type="entry name" value="OS10G0509000 PROTEIN-RELATED"/>
    <property type="match status" value="1"/>
</dbReference>
<dbReference type="Pfam" id="PF20297">
    <property type="entry name" value="MSSS"/>
    <property type="match status" value="1"/>
</dbReference>
<dbReference type="Pfam" id="PF00488">
    <property type="entry name" value="MutS_V"/>
    <property type="match status" value="1"/>
</dbReference>
<dbReference type="Pfam" id="PF01713">
    <property type="entry name" value="Smr"/>
    <property type="match status" value="1"/>
</dbReference>
<dbReference type="PIRSF" id="PIRSF005814">
    <property type="entry name" value="MutS_YshD"/>
    <property type="match status" value="1"/>
</dbReference>
<dbReference type="SMART" id="SM00534">
    <property type="entry name" value="MUTSac"/>
    <property type="match status" value="1"/>
</dbReference>
<dbReference type="SMART" id="SM00533">
    <property type="entry name" value="MUTSd"/>
    <property type="match status" value="1"/>
</dbReference>
<dbReference type="SMART" id="SM00463">
    <property type="entry name" value="SMR"/>
    <property type="match status" value="1"/>
</dbReference>
<dbReference type="SUPFAM" id="SSF48334">
    <property type="entry name" value="DNA repair protein MutS, domain III"/>
    <property type="match status" value="1"/>
</dbReference>
<dbReference type="SUPFAM" id="SSF52540">
    <property type="entry name" value="P-loop containing nucleoside triphosphate hydrolases"/>
    <property type="match status" value="1"/>
</dbReference>
<dbReference type="SUPFAM" id="SSF160443">
    <property type="entry name" value="SMR domain-like"/>
    <property type="match status" value="1"/>
</dbReference>
<dbReference type="PROSITE" id="PS00486">
    <property type="entry name" value="DNA_MISMATCH_REPAIR_2"/>
    <property type="match status" value="1"/>
</dbReference>
<dbReference type="PROSITE" id="PS50828">
    <property type="entry name" value="SMR"/>
    <property type="match status" value="1"/>
</dbReference>
<accession>B3WC74</accession>
<sequence length="786" mass="86082">MNEKILKTLEYDKIQQALLGQVVTANGRQLVQAMQPLTDPVAVQQALDETADGASALRLKGGIPVPQLENIDPALKRVDIGAVLNGQELASISRVLQTVSAIDKFLTDLQDQIDFRQLYTLQESLTVLPQLSRRLKTAVDPDGTLTDEASPQLHGVREQIKSIEGKIRGKMTNYTRGAQSKYLSDPIVTIRDDRYVIPVKAEYRAKFGGVVHDQSATGQTLFIEPQVIVALNNRLREAQLAEVAEINRILAELSNELAPYTGQIKANAAVLGHFDFINAKARLAKAEKATEPLVSADNDVLLRDARHPLIDPHKVVGNDIPLGDKYQAMVITGPNTGGKTITLKTLGLLQLMGQSGLFIPADDESRIGIFDEVFADIGDEQSIEQNLSTFSAHMDNIVHILKQLSQNSLVLFDELGAGTDPQEGAALAIAILDAVGEVGAYVVATTHYPELKLYGYNTAKTINASMEFDSKTLQPTYRLLVGVPGRSNAFDISARLGLPSVIVERAKSMISSDSHELNNMISDLEKQRKAAETAYEAARRQLADAQSVHDELAAAYKKFTTERDAQLQQAKDKANSLVDKAQTKADKIIKQLRQMQLTNPGTVKENQLIAAKTALKQLHQDEPLQKNRILRREREKQALHVGDEVKVASYDQTGTLLEQFDKKHWQVQLGILKMKVPTDEMEKIKPSKQSAAQRPVVKVSGGGMSGPSTTLDLRGERYDQAMADLDQYIDAALLAGYPSVTIIHGLGTGAIRNGVTQYLKRNRQVKTYGFAPQNAGGSGATIVNFK</sequence>
<evidence type="ECO:0000255" key="1">
    <source>
        <dbReference type="HAMAP-Rule" id="MF_00092"/>
    </source>
</evidence>
<evidence type="ECO:0000256" key="2">
    <source>
        <dbReference type="SAM" id="MobiDB-lite"/>
    </source>
</evidence>
<keyword id="KW-0067">ATP-binding</keyword>
<keyword id="KW-0238">DNA-binding</keyword>
<keyword id="KW-0255">Endonuclease</keyword>
<keyword id="KW-0378">Hydrolase</keyword>
<keyword id="KW-0540">Nuclease</keyword>
<keyword id="KW-0547">Nucleotide-binding</keyword>
<keyword id="KW-0694">RNA-binding</keyword>
<keyword id="KW-0699">rRNA-binding</keyword>
<name>MUTS2_LACCB</name>
<gene>
    <name evidence="1" type="primary">mutS2</name>
    <name evidence="1" type="synonym">rqcU</name>
    <name type="ordered locus">LCABL_08520</name>
</gene>
<reference key="1">
    <citation type="submission" date="2008-06" db="EMBL/GenBank/DDBJ databases">
        <title>Lactobacillus casei BL23 complete genome sequence.</title>
        <authorList>
            <person name="Maze A."/>
            <person name="Boel G."/>
            <person name="Bourand A."/>
            <person name="Loux V."/>
            <person name="Gibrat J.F."/>
            <person name="Zuniga M."/>
            <person name="Hartke A."/>
            <person name="Deutscher J."/>
        </authorList>
    </citation>
    <scope>NUCLEOTIDE SEQUENCE [LARGE SCALE GENOMIC DNA]</scope>
    <source>
        <strain>BL23</strain>
    </source>
</reference>